<dbReference type="EMBL" id="CH408038">
    <property type="protein sequence ID" value="EAQ82902.1"/>
    <property type="molecule type" value="Genomic_DNA"/>
</dbReference>
<dbReference type="RefSeq" id="XP_001230254.1">
    <property type="nucleotide sequence ID" value="XM_001230253.1"/>
</dbReference>
<dbReference type="SMR" id="Q2GLX8"/>
<dbReference type="FunCoup" id="Q2GLX8">
    <property type="interactions" value="38"/>
</dbReference>
<dbReference type="STRING" id="306901.Q2GLX8"/>
<dbReference type="GeneID" id="4397379"/>
<dbReference type="VEuPathDB" id="FungiDB:CHGG_11078"/>
<dbReference type="eggNOG" id="KOG1471">
    <property type="taxonomic scope" value="Eukaryota"/>
</dbReference>
<dbReference type="HOGENOM" id="CLU_045138_1_1_1"/>
<dbReference type="InParanoid" id="Q2GLX8"/>
<dbReference type="OMA" id="YNAEFKP"/>
<dbReference type="OrthoDB" id="75724at2759"/>
<dbReference type="Proteomes" id="UP000001056">
    <property type="component" value="Unassembled WGS sequence"/>
</dbReference>
<dbReference type="GO" id="GO:0032541">
    <property type="term" value="C:cortical endoplasmic reticulum"/>
    <property type="evidence" value="ECO:0007669"/>
    <property type="project" value="TreeGrafter"/>
</dbReference>
<dbReference type="GO" id="GO:0005829">
    <property type="term" value="C:cytosol"/>
    <property type="evidence" value="ECO:0007669"/>
    <property type="project" value="TreeGrafter"/>
</dbReference>
<dbReference type="GO" id="GO:0005789">
    <property type="term" value="C:endoplasmic reticulum membrane"/>
    <property type="evidence" value="ECO:0007669"/>
    <property type="project" value="UniProtKB-SubCell"/>
</dbReference>
<dbReference type="GO" id="GO:0005886">
    <property type="term" value="C:plasma membrane"/>
    <property type="evidence" value="ECO:0007669"/>
    <property type="project" value="TreeGrafter"/>
</dbReference>
<dbReference type="GO" id="GO:0046872">
    <property type="term" value="F:metal ion binding"/>
    <property type="evidence" value="ECO:0007669"/>
    <property type="project" value="UniProtKB-KW"/>
</dbReference>
<dbReference type="GO" id="GO:0008526">
    <property type="term" value="F:phosphatidylinositol transfer activity"/>
    <property type="evidence" value="ECO:0007669"/>
    <property type="project" value="InterPro"/>
</dbReference>
<dbReference type="GO" id="GO:0043001">
    <property type="term" value="P:Golgi to plasma membrane protein transport"/>
    <property type="evidence" value="ECO:0007669"/>
    <property type="project" value="TreeGrafter"/>
</dbReference>
<dbReference type="GO" id="GO:0017157">
    <property type="term" value="P:regulation of exocytosis"/>
    <property type="evidence" value="ECO:0007669"/>
    <property type="project" value="TreeGrafter"/>
</dbReference>
<dbReference type="CDD" id="cd00170">
    <property type="entry name" value="SEC14"/>
    <property type="match status" value="1"/>
</dbReference>
<dbReference type="Gene3D" id="3.40.525.10">
    <property type="entry name" value="CRAL-TRIO lipid binding domain"/>
    <property type="match status" value="1"/>
</dbReference>
<dbReference type="InterPro" id="IPR001251">
    <property type="entry name" value="CRAL-TRIO_dom"/>
</dbReference>
<dbReference type="InterPro" id="IPR036865">
    <property type="entry name" value="CRAL-TRIO_dom_sf"/>
</dbReference>
<dbReference type="InterPro" id="IPR011074">
    <property type="entry name" value="CRAL/TRIO_N_dom"/>
</dbReference>
<dbReference type="InterPro" id="IPR036273">
    <property type="entry name" value="CRAL/TRIO_N_dom_sf"/>
</dbReference>
<dbReference type="InterPro" id="IPR042938">
    <property type="entry name" value="Sfh5"/>
</dbReference>
<dbReference type="PANTHER" id="PTHR47669">
    <property type="entry name" value="PHOSPHATIDYLINOSITOL TRANSFER PROTEIN SFH5"/>
    <property type="match status" value="1"/>
</dbReference>
<dbReference type="PANTHER" id="PTHR47669:SF1">
    <property type="entry name" value="PHOSPHATIDYLINOSITOL TRANSFER PROTEIN SFH5"/>
    <property type="match status" value="1"/>
</dbReference>
<dbReference type="Pfam" id="PF00650">
    <property type="entry name" value="CRAL_TRIO"/>
    <property type="match status" value="1"/>
</dbReference>
<dbReference type="Pfam" id="PF03765">
    <property type="entry name" value="CRAL_TRIO_N"/>
    <property type="match status" value="1"/>
</dbReference>
<dbReference type="SMART" id="SM00516">
    <property type="entry name" value="SEC14"/>
    <property type="match status" value="1"/>
</dbReference>
<dbReference type="SUPFAM" id="SSF52087">
    <property type="entry name" value="CRAL/TRIO domain"/>
    <property type="match status" value="1"/>
</dbReference>
<dbReference type="SUPFAM" id="SSF46938">
    <property type="entry name" value="CRAL/TRIO N-terminal domain"/>
    <property type="match status" value="1"/>
</dbReference>
<dbReference type="PROSITE" id="PS50191">
    <property type="entry name" value="CRAL_TRIO"/>
    <property type="match status" value="1"/>
</dbReference>
<accession>Q2GLX8</accession>
<reference key="1">
    <citation type="journal article" date="2015" name="Genome Announc.">
        <title>Draft genome sequence of the cellulolytic fungus Chaetomium globosum.</title>
        <authorList>
            <person name="Cuomo C.A."/>
            <person name="Untereiner W.A."/>
            <person name="Ma L.-J."/>
            <person name="Grabherr M."/>
            <person name="Birren B.W."/>
        </authorList>
    </citation>
    <scope>NUCLEOTIDE SEQUENCE [LARGE SCALE GENOMIC DNA]</scope>
    <source>
        <strain>ATCC 6205 / CBS 148.51 / DSM 1962 / NBRC 6347 / NRRL 1970</strain>
    </source>
</reference>
<proteinExistence type="inferred from homology"/>
<gene>
    <name type="primary">SFH5</name>
    <name type="ORF">CHGG_11078</name>
</gene>
<evidence type="ECO:0000250" key="1">
    <source>
        <dbReference type="UniProtKB" id="A6ZQI5"/>
    </source>
</evidence>
<evidence type="ECO:0000250" key="2">
    <source>
        <dbReference type="UniProtKB" id="P47008"/>
    </source>
</evidence>
<evidence type="ECO:0000255" key="3">
    <source>
        <dbReference type="PROSITE-ProRule" id="PRU00056"/>
    </source>
</evidence>
<evidence type="ECO:0000256" key="4">
    <source>
        <dbReference type="SAM" id="MobiDB-lite"/>
    </source>
</evidence>
<evidence type="ECO:0000305" key="5"/>
<name>SFH5_CHAGB</name>
<keyword id="KW-0963">Cytoplasm</keyword>
<keyword id="KW-0256">Endoplasmic reticulum</keyword>
<keyword id="KW-0349">Heme</keyword>
<keyword id="KW-0408">Iron</keyword>
<keyword id="KW-0445">Lipid transport</keyword>
<keyword id="KW-0472">Membrane</keyword>
<keyword id="KW-0479">Metal-binding</keyword>
<keyword id="KW-0492">Microsome</keyword>
<keyword id="KW-1185">Reference proteome</keyword>
<keyword id="KW-0813">Transport</keyword>
<feature type="chain" id="PRO_0000324975" description="Phosphatidylinositol transfer protein SFH5">
    <location>
        <begin position="1"/>
        <end position="436"/>
    </location>
</feature>
<feature type="domain" description="CRAL-TRIO" evidence="3">
    <location>
        <begin position="248"/>
        <end position="427"/>
    </location>
</feature>
<feature type="region of interest" description="Disordered" evidence="4">
    <location>
        <begin position="60"/>
        <end position="79"/>
    </location>
</feature>
<feature type="region of interest" description="Disordered" evidence="4">
    <location>
        <begin position="87"/>
        <end position="168"/>
    </location>
</feature>
<feature type="compositionally biased region" description="Low complexity" evidence="4">
    <location>
        <begin position="87"/>
        <end position="113"/>
    </location>
</feature>
<feature type="compositionally biased region" description="Basic and acidic residues" evidence="4">
    <location>
        <begin position="134"/>
        <end position="167"/>
    </location>
</feature>
<feature type="binding site" evidence="1">
    <location>
        <position position="273"/>
    </location>
    <ligand>
        <name>heme</name>
        <dbReference type="ChEBI" id="CHEBI:30413"/>
    </ligand>
</feature>
<feature type="binding site" evidence="1">
    <location>
        <position position="293"/>
    </location>
    <ligand>
        <name>heme</name>
        <dbReference type="ChEBI" id="CHEBI:30413"/>
    </ligand>
</feature>
<feature type="binding site" evidence="1">
    <location>
        <position position="326"/>
    </location>
    <ligand>
        <name>heme</name>
        <dbReference type="ChEBI" id="CHEBI:30413"/>
    </ligand>
</feature>
<feature type="binding site" description="proximal binding residue" evidence="1">
    <location>
        <position position="328"/>
    </location>
    <ligand>
        <name>heme</name>
        <dbReference type="ChEBI" id="CHEBI:30413"/>
    </ligand>
    <ligandPart>
        <name>Fe</name>
        <dbReference type="ChEBI" id="CHEBI:18248"/>
    </ligandPart>
</feature>
<feature type="binding site" evidence="1">
    <location>
        <position position="362"/>
    </location>
    <ligand>
        <name>heme</name>
        <dbReference type="ChEBI" id="CHEBI:30413"/>
    </ligand>
</feature>
<organism>
    <name type="scientific">Chaetomium globosum (strain ATCC 6205 / CBS 148.51 / DSM 1962 / NBRC 6347 / NRRL 1970)</name>
    <name type="common">Soil fungus</name>
    <dbReference type="NCBI Taxonomy" id="306901"/>
    <lineage>
        <taxon>Eukaryota</taxon>
        <taxon>Fungi</taxon>
        <taxon>Dikarya</taxon>
        <taxon>Ascomycota</taxon>
        <taxon>Pezizomycotina</taxon>
        <taxon>Sordariomycetes</taxon>
        <taxon>Sordariomycetidae</taxon>
        <taxon>Sordariales</taxon>
        <taxon>Chaetomiaceae</taxon>
        <taxon>Chaetomium</taxon>
    </lineage>
</organism>
<comment type="function">
    <text evidence="2">Non-classical phosphatidylinositol (PtdIns) transfer protein (PITP), which exhibits PtdIns-binding/transfer activity in the absence of detectable PtdCho-binding/transfer activity. Regulates PtdIns(4,5)P2 homeostasis at the plasma membrane. Heme-binding protein that may play a role in organic oxidant-induced stress responses.</text>
</comment>
<comment type="catalytic activity">
    <reaction evidence="2">
        <text>a 1,2-diacyl-sn-glycero-3-phospho-(1D-myo-inositol)(in) = a 1,2-diacyl-sn-glycero-3-phospho-(1D-myo-inositol)(out)</text>
        <dbReference type="Rhea" id="RHEA:38691"/>
        <dbReference type="ChEBI" id="CHEBI:57880"/>
    </reaction>
    <physiologicalReaction direction="left-to-right" evidence="2">
        <dbReference type="Rhea" id="RHEA:38692"/>
    </physiologicalReaction>
</comment>
<comment type="cofactor">
    <cofactor evidence="1">
        <name>heme b</name>
        <dbReference type="ChEBI" id="CHEBI:60344"/>
    </cofactor>
</comment>
<comment type="subcellular location">
    <subcellularLocation>
        <location evidence="2">Cytoplasm</location>
    </subcellularLocation>
    <subcellularLocation>
        <location evidence="2">Endoplasmic reticulum membrane</location>
        <topology evidence="2">Peripheral membrane protein</topology>
    </subcellularLocation>
    <subcellularLocation>
        <location evidence="2">Microsome membrane</location>
        <topology evidence="2">Peripheral membrane protein</topology>
    </subcellularLocation>
</comment>
<comment type="similarity">
    <text evidence="5">Belongs to the SFH5 family.</text>
</comment>
<protein>
    <recommendedName>
        <fullName>Phosphatidylinositol transfer protein SFH5</fullName>
        <shortName>PITP SFH5</shortName>
    </recommendedName>
</protein>
<sequence>MYGRSVQDCAYTASIGMIAQGQNDFAANGRIWLGLLAPHDRGRGLGLGCECLRPIKMSAVEQKPSEQPAPTTVAPDTVSTPEPAVAAAADNATAAPAPSETPATPAAPAAPDASGAQDTPATAGADSEVPAPTETKELVETKEPAEKKEPAETKEAPVEKAPVDDKTPITQLWATAKATGHPEIWGVTLADPETHVPTRIILQKYLNANDADLDKAKDQLTKTLEWRAKTKPLELVKKAFSKTKFDGLGYVTKYVQDGSTEPEAKEVFTWNIYGGVKSIDETFGKLEEFLDWRVALMELALQELDLASATKLITAEYDPYKIFQVHDYKSISFLRQSPQVKSASAETIKVFAQNYPELLKEKFFVNVPAIMGFVYAFMKLFVAPKTIKKFHPMSNGGSLAVEFADSKVAALGEKLPANYGGKGAELEEQGKGPLLE</sequence>